<dbReference type="EMBL" id="X17255">
    <property type="protein sequence ID" value="CAA35156.1"/>
    <property type="molecule type" value="Genomic_DNA"/>
</dbReference>
<dbReference type="EMBL" id="X15840">
    <property type="protein sequence ID" value="CAB57821.1"/>
    <property type="molecule type" value="Genomic_DNA"/>
</dbReference>
<dbReference type="PIR" id="S26175">
    <property type="entry name" value="S26175"/>
</dbReference>
<dbReference type="SMR" id="P20837"/>
<proteinExistence type="predicted"/>
<organismHost>
    <name type="scientific">Escherichia coli</name>
    <dbReference type="NCBI Taxonomy" id="562"/>
</organismHost>
<feature type="chain" id="PRO_0000106524" description="Tail tubular protein A">
    <location>
        <begin position="1"/>
        <end position="30" status="greater than"/>
    </location>
</feature>
<feature type="non-terminal residue">
    <location>
        <position position="30"/>
    </location>
</feature>
<organism>
    <name type="scientific">Enterobacteria phage T3</name>
    <name type="common">Bacteriophage T3</name>
    <dbReference type="NCBI Taxonomy" id="10759"/>
    <lineage>
        <taxon>Viruses</taxon>
        <taxon>Duplodnaviria</taxon>
        <taxon>Heunggongvirae</taxon>
        <taxon>Uroviricota</taxon>
        <taxon>Caudoviricetes</taxon>
        <taxon>Autographiviridae</taxon>
        <taxon>Studiervirinae</taxon>
        <taxon>Teetrevirus</taxon>
        <taxon>Teetrevirus T3</taxon>
    </lineage>
</organism>
<reference key="1">
    <citation type="journal article" date="1989" name="J. Mol. Biol.">
        <title>Nucleotide sequence and complementation studies of the gene 10 region of bacteriophage T3.</title>
        <authorList>
            <person name="Condreay J.P."/>
            <person name="Wright S.E."/>
            <person name="Molineux I.J."/>
        </authorList>
    </citation>
    <scope>NUCLEOTIDE SEQUENCE [GENOMIC DNA]</scope>
    <source>
        <strain>Luria</strain>
    </source>
</reference>
<protein>
    <recommendedName>
        <fullName>Tail tubular protein A</fullName>
    </recommendedName>
</protein>
<name>VTTA_BPT3</name>
<accession>P20837</accession>
<gene>
    <name type="primary">11</name>
</gene>
<sequence>MRSYEMNIETAEELSAVNDILASIGEPPVS</sequence>